<dbReference type="EMBL" id="M80234">
    <property type="status" value="NOT_ANNOTATED_CDS"/>
    <property type="molecule type" value="mRNA"/>
</dbReference>
<dbReference type="PIR" id="A41617">
    <property type="entry name" value="A41617"/>
</dbReference>
<dbReference type="SMR" id="P27922"/>
<dbReference type="FunCoup" id="P27922">
    <property type="interactions" value="33"/>
</dbReference>
<dbReference type="STRING" id="9913.ENSBTAP00000021061"/>
<dbReference type="BindingDB" id="P27922"/>
<dbReference type="ChEMBL" id="CHEMBL2986"/>
<dbReference type="DrugCentral" id="P27922"/>
<dbReference type="GlyCosmos" id="P27922">
    <property type="glycosylation" value="3 sites, No reported glycans"/>
</dbReference>
<dbReference type="GlyGen" id="P27922">
    <property type="glycosylation" value="3 sites"/>
</dbReference>
<dbReference type="InParanoid" id="P27922"/>
<dbReference type="OrthoDB" id="6581954at2759"/>
<dbReference type="Proteomes" id="UP000009136">
    <property type="component" value="Unplaced"/>
</dbReference>
<dbReference type="GO" id="GO:0030424">
    <property type="term" value="C:axon"/>
    <property type="evidence" value="ECO:0007669"/>
    <property type="project" value="UniProtKB-SubCell"/>
</dbReference>
<dbReference type="GO" id="GO:0043005">
    <property type="term" value="C:neuron projection"/>
    <property type="evidence" value="ECO:0000250"/>
    <property type="project" value="UniProtKB"/>
</dbReference>
<dbReference type="GO" id="GO:0005886">
    <property type="term" value="C:plasma membrane"/>
    <property type="evidence" value="ECO:0000318"/>
    <property type="project" value="GO_Central"/>
</dbReference>
<dbReference type="GO" id="GO:0005330">
    <property type="term" value="F:dopamine:sodium symporter activity"/>
    <property type="evidence" value="ECO:0000250"/>
    <property type="project" value="UniProtKB"/>
</dbReference>
<dbReference type="GO" id="GO:0046872">
    <property type="term" value="F:metal ion binding"/>
    <property type="evidence" value="ECO:0007669"/>
    <property type="project" value="UniProtKB-KW"/>
</dbReference>
<dbReference type="GO" id="GO:0006865">
    <property type="term" value="P:amino acid transport"/>
    <property type="evidence" value="ECO:0000318"/>
    <property type="project" value="GO_Central"/>
</dbReference>
<dbReference type="GO" id="GO:0015872">
    <property type="term" value="P:dopamine transport"/>
    <property type="evidence" value="ECO:0000250"/>
    <property type="project" value="UniProtKB"/>
</dbReference>
<dbReference type="GO" id="GO:1990384">
    <property type="term" value="P:hyaloid vascular plexus regression"/>
    <property type="evidence" value="ECO:0000250"/>
    <property type="project" value="UniProtKB"/>
</dbReference>
<dbReference type="GO" id="GO:0006836">
    <property type="term" value="P:neurotransmitter transport"/>
    <property type="evidence" value="ECO:0007669"/>
    <property type="project" value="UniProtKB-KW"/>
</dbReference>
<dbReference type="GO" id="GO:0035725">
    <property type="term" value="P:sodium ion transmembrane transport"/>
    <property type="evidence" value="ECO:0000318"/>
    <property type="project" value="GO_Central"/>
</dbReference>
<dbReference type="InterPro" id="IPR000175">
    <property type="entry name" value="Na/ntran_symport"/>
</dbReference>
<dbReference type="InterPro" id="IPR002436">
    <property type="entry name" value="Na/ntran_symport_dopamine"/>
</dbReference>
<dbReference type="InterPro" id="IPR037272">
    <property type="entry name" value="SNS_sf"/>
</dbReference>
<dbReference type="NCBIfam" id="NF037979">
    <property type="entry name" value="Na_transp"/>
    <property type="match status" value="1"/>
</dbReference>
<dbReference type="PANTHER" id="PTHR11616:SF38">
    <property type="entry name" value="SODIUM-DEPENDENT DOPAMINE TRANSPORTER"/>
    <property type="match status" value="1"/>
</dbReference>
<dbReference type="PANTHER" id="PTHR11616">
    <property type="entry name" value="SODIUM/CHLORIDE DEPENDENT TRANSPORTER"/>
    <property type="match status" value="1"/>
</dbReference>
<dbReference type="Pfam" id="PF00209">
    <property type="entry name" value="SNF"/>
    <property type="match status" value="1"/>
</dbReference>
<dbReference type="PRINTS" id="PR01202">
    <property type="entry name" value="DOPTRANSPORT"/>
</dbReference>
<dbReference type="PRINTS" id="PR00176">
    <property type="entry name" value="NANEUSMPORT"/>
</dbReference>
<dbReference type="SUPFAM" id="SSF161070">
    <property type="entry name" value="SNF-like"/>
    <property type="match status" value="1"/>
</dbReference>
<dbReference type="PROSITE" id="PS00610">
    <property type="entry name" value="NA_NEUROTRAN_SYMP_1"/>
    <property type="match status" value="1"/>
</dbReference>
<dbReference type="PROSITE" id="PS00754">
    <property type="entry name" value="NA_NEUROTRAN_SYMP_2"/>
    <property type="match status" value="1"/>
</dbReference>
<dbReference type="PROSITE" id="PS50267">
    <property type="entry name" value="NA_NEUROTRAN_SYMP_3"/>
    <property type="match status" value="1"/>
</dbReference>
<gene>
    <name type="primary">SLC6A3</name>
</gene>
<evidence type="ECO:0000250" key="1"/>
<evidence type="ECO:0000250" key="2">
    <source>
        <dbReference type="UniProtKB" id="P23977"/>
    </source>
</evidence>
<evidence type="ECO:0000250" key="3">
    <source>
        <dbReference type="UniProtKB" id="Q01959"/>
    </source>
</evidence>
<evidence type="ECO:0000250" key="4">
    <source>
        <dbReference type="UniProtKB" id="Q61327"/>
    </source>
</evidence>
<evidence type="ECO:0000255" key="5"/>
<evidence type="ECO:0000269" key="6">
    <source>
    </source>
</evidence>
<evidence type="ECO:0000305" key="7"/>
<proteinExistence type="evidence at protein level"/>
<keyword id="KW-1003">Cell membrane</keyword>
<keyword id="KW-0966">Cell projection</keyword>
<keyword id="KW-1015">Disulfide bond</keyword>
<keyword id="KW-0325">Glycoprotein</keyword>
<keyword id="KW-0472">Membrane</keyword>
<keyword id="KW-0479">Metal-binding</keyword>
<keyword id="KW-0532">Neurotransmitter transport</keyword>
<keyword id="KW-1185">Reference proteome</keyword>
<keyword id="KW-0915">Sodium</keyword>
<keyword id="KW-0769">Symport</keyword>
<keyword id="KW-0812">Transmembrane</keyword>
<keyword id="KW-1133">Transmembrane helix</keyword>
<keyword id="KW-0813">Transport</keyword>
<organism>
    <name type="scientific">Bos taurus</name>
    <name type="common">Bovine</name>
    <dbReference type="NCBI Taxonomy" id="9913"/>
    <lineage>
        <taxon>Eukaryota</taxon>
        <taxon>Metazoa</taxon>
        <taxon>Chordata</taxon>
        <taxon>Craniata</taxon>
        <taxon>Vertebrata</taxon>
        <taxon>Euteleostomi</taxon>
        <taxon>Mammalia</taxon>
        <taxon>Eutheria</taxon>
        <taxon>Laurasiatheria</taxon>
        <taxon>Artiodactyla</taxon>
        <taxon>Ruminantia</taxon>
        <taxon>Pecora</taxon>
        <taxon>Bovidae</taxon>
        <taxon>Bovinae</taxon>
        <taxon>Bos</taxon>
    </lineage>
</organism>
<name>SC6A3_BOVIN</name>
<comment type="function">
    <text evidence="2 4 6">Mediates sodium- and chloride-dependent transport of dopamine (PubMed:1722321). Also mediates sodium- and chloride-dependent transport of norepinephrine (also known as noradrenaline) (By similarity). Regulator of light-dependent retinal hyaloid vessel regression, downstream of OPN5 signaling (By similarity).</text>
</comment>
<comment type="catalytic activity">
    <reaction evidence="6">
        <text>dopamine(out) + chloride(out) + Na(+)(out) = dopamine(in) + chloride(in) + Na(+)(in)</text>
        <dbReference type="Rhea" id="RHEA:70919"/>
        <dbReference type="ChEBI" id="CHEBI:17996"/>
        <dbReference type="ChEBI" id="CHEBI:29101"/>
        <dbReference type="ChEBI" id="CHEBI:59905"/>
    </reaction>
</comment>
<comment type="catalytic activity">
    <reaction evidence="2">
        <text>(R)-noradrenaline(out) + chloride(out) + Na(+)(out) = (R)-noradrenaline(in) + chloride(in) + Na(+)(in)</text>
        <dbReference type="Rhea" id="RHEA:70923"/>
        <dbReference type="ChEBI" id="CHEBI:17996"/>
        <dbReference type="ChEBI" id="CHEBI:29101"/>
        <dbReference type="ChEBI" id="CHEBI:72587"/>
    </reaction>
</comment>
<comment type="catalytic activity">
    <reaction evidence="2">
        <text>dopamine(out) + chloride(out) + 2 Na(+)(out) = dopamine(in) + chloride(in) + 2 Na(+)(in)</text>
        <dbReference type="Rhea" id="RHEA:70931"/>
        <dbReference type="ChEBI" id="CHEBI:17996"/>
        <dbReference type="ChEBI" id="CHEBI:29101"/>
        <dbReference type="ChEBI" id="CHEBI:59905"/>
    </reaction>
</comment>
<comment type="activity regulation">
    <text evidence="3 6">Inhibited by GBR 12909 dihydrochloride, amphetamine and cocaine (PubMed:1722321). Inhibited by zinc ions (By similarity).</text>
</comment>
<comment type="biophysicochemical properties">
    <kinetics>
        <KM evidence="6">31.5 uM for dopamine</KM>
    </kinetics>
</comment>
<comment type="subunit">
    <text evidence="3 4">Monomer (By similarity). Homooligomer; disulfide-linked (By similarity). Interacts with PRKCABP and TGFB1I1 (By similarity). Interacts (via N-terminus) with SYNGR3 (via N-terminus) (By similarity). Interacts with SLC18A2 (By similarity). Interacts with TOR1A (ATP-bound); TOR1A regulates SLC6A3 subcellular location (By similarity). Interacts with alpha-synuclein/SNCA (By similarity). Interacts with SEPTIN4 (By similarity).</text>
</comment>
<comment type="subcellular location">
    <subcellularLocation>
        <location evidence="3">Cell membrane</location>
        <topology evidence="3">Multi-pass membrane protein</topology>
    </subcellularLocation>
    <subcellularLocation>
        <location evidence="2">Cell projection</location>
        <location evidence="2">Neuron projection</location>
    </subcellularLocation>
    <subcellularLocation>
        <location evidence="3">Cell projection</location>
        <location evidence="3">Axon</location>
    </subcellularLocation>
    <text evidence="2 4">Localizes to neurite tips in neuronal cells (By similarity). Colocalizes with SEPTIN4 at axon terminals, especially at the varicosities (By similarity).</text>
</comment>
<comment type="tissue specificity">
    <text evidence="6">Expressed in the neurons of the substantia nigra of the brain.</text>
</comment>
<comment type="miscellaneous">
    <text>This protein is the target of psychomotor stimulants such as amphetamines or cocaine.</text>
</comment>
<comment type="similarity">
    <text evidence="7">Belongs to the sodium:neurotransmitter symporter (SNF) (TC 2.A.22) family. SLC6A3 subfamily.</text>
</comment>
<feature type="chain" id="PRO_0000214750" description="Sodium-dependent dopamine transporter">
    <location>
        <begin position="1"/>
        <end position="693"/>
    </location>
</feature>
<feature type="topological domain" description="Cytoplasmic" evidence="3">
    <location>
        <begin position="1"/>
        <end position="56"/>
    </location>
</feature>
<feature type="transmembrane region" description="Discontinuously helical; Name=1" evidence="3">
    <location>
        <begin position="57"/>
        <end position="95"/>
    </location>
</feature>
<feature type="transmembrane region" description="Helical; Name=2" evidence="3">
    <location>
        <begin position="96"/>
        <end position="127"/>
    </location>
</feature>
<feature type="transmembrane region" description="Helical; Name=3" evidence="3">
    <location>
        <begin position="128"/>
        <end position="171"/>
    </location>
</feature>
<feature type="topological domain" description="Extracellular" evidence="3">
    <location>
        <begin position="172"/>
        <end position="233"/>
    </location>
</feature>
<feature type="transmembrane region" description="Helical; Name=4" evidence="3">
    <location>
        <begin position="234"/>
        <end position="253"/>
    </location>
</feature>
<feature type="transmembrane region" description="Helical; Name=5" evidence="3">
    <location>
        <begin position="254"/>
        <end position="284"/>
    </location>
</feature>
<feature type="topological domain" description="Extracellular" evidence="3">
    <location>
        <begin position="285"/>
        <end position="303"/>
    </location>
</feature>
<feature type="transmembrane region" description="Discontinuously helical; Name=6" evidence="3">
    <location>
        <begin position="304"/>
        <end position="332"/>
    </location>
</feature>
<feature type="transmembrane region" description="Helical; Name=7" evidence="3">
    <location>
        <begin position="333"/>
        <end position="373"/>
    </location>
</feature>
<feature type="topological domain" description="Extracellular" evidence="3">
    <location>
        <begin position="374"/>
        <end position="397"/>
    </location>
</feature>
<feature type="transmembrane region" description="Helical; Name=8" evidence="3">
    <location>
        <begin position="398"/>
        <end position="439"/>
    </location>
</feature>
<feature type="transmembrane region" description="Helical; Name=9" evidence="3">
    <location>
        <begin position="440"/>
        <end position="463"/>
    </location>
</feature>
<feature type="transmembrane region" description="Helical; Name=10" evidence="3">
    <location>
        <begin position="464"/>
        <end position="496"/>
    </location>
</feature>
<feature type="topological domain" description="Cytoplasmic" evidence="3">
    <location>
        <begin position="497"/>
        <end position="513"/>
    </location>
</feature>
<feature type="transmembrane region" description="Helical; Name=11" evidence="3">
    <location>
        <begin position="514"/>
        <end position="539"/>
    </location>
</feature>
<feature type="topological domain" description="Extracellular" evidence="3">
    <location>
        <begin position="540"/>
        <end position="550"/>
    </location>
</feature>
<feature type="transmembrane region" description="Helical; Name=12" evidence="3">
    <location>
        <begin position="551"/>
        <end position="580"/>
    </location>
</feature>
<feature type="topological domain" description="Cytoplasmic" evidence="3">
    <location>
        <begin position="581"/>
        <end position="693"/>
    </location>
</feature>
<feature type="region of interest" description="Interaction with TGFB1I1" evidence="1">
    <location>
        <begin position="558"/>
        <end position="587"/>
    </location>
</feature>
<feature type="binding site" evidence="3">
    <location>
        <position position="75"/>
    </location>
    <ligand>
        <name>Na(+)</name>
        <dbReference type="ChEBI" id="CHEBI:29101"/>
        <label>1</label>
    </ligand>
</feature>
<feature type="binding site" evidence="3">
    <location>
        <position position="77"/>
    </location>
    <ligand>
        <name>Na(+)</name>
        <dbReference type="ChEBI" id="CHEBI:29101"/>
        <label>2</label>
    </ligand>
</feature>
<feature type="binding site" evidence="3">
    <location>
        <position position="78"/>
    </location>
    <ligand>
        <name>Na(+)</name>
        <dbReference type="ChEBI" id="CHEBI:29101"/>
        <label>1</label>
    </ligand>
</feature>
<feature type="binding site" evidence="3">
    <location>
        <position position="79"/>
    </location>
    <ligand>
        <name>dopamine</name>
        <dbReference type="ChEBI" id="CHEBI:59905"/>
    </ligand>
</feature>
<feature type="binding site" evidence="3">
    <location>
        <position position="79"/>
    </location>
    <ligand>
        <name>Na(+)</name>
        <dbReference type="ChEBI" id="CHEBI:29101"/>
        <label>1</label>
    </ligand>
</feature>
<feature type="binding site" evidence="3">
    <location>
        <position position="79"/>
    </location>
    <ligand>
        <name>Na(+)</name>
        <dbReference type="ChEBI" id="CHEBI:29101"/>
        <label>2</label>
    </ligand>
</feature>
<feature type="binding site" evidence="3">
    <location>
        <position position="82"/>
    </location>
    <ligand>
        <name>Na(+)</name>
        <dbReference type="ChEBI" id="CHEBI:29101"/>
        <label>2</label>
    </ligand>
</feature>
<feature type="binding site" evidence="3">
    <location>
        <position position="149"/>
    </location>
    <ligand>
        <name>dopamine</name>
        <dbReference type="ChEBI" id="CHEBI:59905"/>
    </ligand>
</feature>
<feature type="binding site" evidence="3">
    <location>
        <position position="153"/>
    </location>
    <ligand>
        <name>dopamine</name>
        <dbReference type="ChEBI" id="CHEBI:59905"/>
    </ligand>
</feature>
<feature type="binding site" evidence="3">
    <location>
        <position position="314"/>
    </location>
    <ligand>
        <name>chloride</name>
        <dbReference type="ChEBI" id="CHEBI:17996"/>
    </ligand>
</feature>
<feature type="binding site" evidence="3">
    <location>
        <position position="317"/>
    </location>
    <ligand>
        <name>dopamine</name>
        <dbReference type="ChEBI" id="CHEBI:59905"/>
    </ligand>
</feature>
<feature type="binding site" evidence="3">
    <location>
        <position position="318"/>
    </location>
    <ligand>
        <name>chloride</name>
        <dbReference type="ChEBI" id="CHEBI:17996"/>
    </ligand>
</feature>
<feature type="binding site" evidence="3">
    <location>
        <position position="318"/>
    </location>
    <ligand>
        <name>Na(+)</name>
        <dbReference type="ChEBI" id="CHEBI:29101"/>
        <label>2</label>
    </ligand>
</feature>
<feature type="binding site" evidence="3">
    <location>
        <position position="350"/>
    </location>
    <ligand>
        <name>Na(+)</name>
        <dbReference type="ChEBI" id="CHEBI:29101"/>
        <label>2</label>
    </ligand>
</feature>
<feature type="binding site" evidence="3">
    <location>
        <position position="354"/>
    </location>
    <ligand>
        <name>chloride</name>
        <dbReference type="ChEBI" id="CHEBI:17996"/>
    </ligand>
</feature>
<feature type="binding site" evidence="3">
    <location>
        <position position="415"/>
    </location>
    <ligand>
        <name>Na(+)</name>
        <dbReference type="ChEBI" id="CHEBI:29101"/>
        <label>1</label>
    </ligand>
</feature>
<feature type="binding site" evidence="3">
    <location>
        <position position="418"/>
    </location>
    <ligand>
        <name>Na(+)</name>
        <dbReference type="ChEBI" id="CHEBI:29101"/>
        <label>1</label>
    </ligand>
</feature>
<feature type="binding site" evidence="3">
    <location>
        <position position="419"/>
    </location>
    <ligand>
        <name>dopamine</name>
        <dbReference type="ChEBI" id="CHEBI:59905"/>
    </ligand>
</feature>
<feature type="binding site" evidence="3">
    <location>
        <position position="419"/>
    </location>
    <ligand>
        <name>Na(+)</name>
        <dbReference type="ChEBI" id="CHEBI:29101"/>
        <label>1</label>
    </ligand>
</feature>
<feature type="binding site" evidence="3">
    <location>
        <position position="420"/>
    </location>
    <ligand>
        <name>dopamine</name>
        <dbReference type="ChEBI" id="CHEBI:59905"/>
    </ligand>
</feature>
<feature type="site" description="Contributes to high-affinity binding to cocaine" evidence="4">
    <location>
        <position position="105"/>
    </location>
</feature>
<feature type="glycosylation site" description="N-linked (GlcNAc...) asparagine" evidence="3">
    <location>
        <position position="181"/>
    </location>
</feature>
<feature type="glycosylation site" description="N-linked (GlcNAc...) asparagine" evidence="3">
    <location>
        <position position="196"/>
    </location>
</feature>
<feature type="glycosylation site" description="N-linked (GlcNAc...) asparagine" evidence="5">
    <location>
        <position position="202"/>
    </location>
</feature>
<feature type="disulfide bond" evidence="3">
    <location>
        <begin position="180"/>
        <end position="189"/>
    </location>
</feature>
<feature type="disulfide bond" description="Interchain" evidence="3">
    <location>
        <position position="303"/>
    </location>
</feature>
<protein>
    <recommendedName>
        <fullName>Sodium-dependent dopamine transporter</fullName>
        <shortName>DA transporter</shortName>
        <shortName evidence="3">DAT</shortName>
    </recommendedName>
    <alternativeName>
        <fullName>Solute carrier family 6 member 3</fullName>
    </alternativeName>
</protein>
<accession>P27922</accession>
<reference key="1">
    <citation type="journal article" date="1991" name="Proc. Natl. Acad. Sci. U.S.A.">
        <title>Cloning of the cocaine-sensitive bovine dopamine transporter.</title>
        <authorList>
            <person name="Usdin T.B."/>
            <person name="Mezey E."/>
            <person name="Chen C."/>
            <person name="Brownstein M.J."/>
            <person name="Hoffman B.J."/>
        </authorList>
    </citation>
    <scope>NUCLEOTIDE SEQUENCE [MRNA]</scope>
    <scope>FUNCTION</scope>
    <scope>SUBCELLULAR LOCATION</scope>
    <scope>TISSUE SPECIFICITY</scope>
    <scope>TRANSPORTER ACTIVITY</scope>
    <scope>BIOPHYSICOCHEMICAL PROPERTIES</scope>
    <scope>ACTIVITY REGULATION</scope>
    <source>
        <tissue>Brain</tissue>
    </source>
</reference>
<sequence>MSEGRCSVAHMSSVVAPAKEANAMGPKAVELVLVKEQNGVQLTNSTLLNPPQSPTEAQDRETWSKKADFLLSVIGFAVDLANVWRFPYLCYKNGGGAFLVPYLFFMVVAGVPLFYMELALGQFNREGAAGVWKICPILRGVGYTAILISLYIGFFYNVIIAWALHYLLSSFTTELPWTHCNHSWNSPRCSDARAPNASSGPNGTSRTTPAAEYFERGVLHLHESQGIDDLGPPRWQLTSCLVLVIVLLYFSLWKGVKTSGKVVWITATMPYVVLFALLLRGITLPGAVDAIRAYLSVDFHRLCEASVWIDAAIQICFSLGVGLGVLIAFSSYNKFTNNCYRDAIITTSVNSLTSFSSGFVVFSFLGYMAQKHSVPIGDVAKDGPGLIFIIYPEALATLPLSSVWAVVFFVMLLTLGIDSAMGGMESVITGLADEFQLLHRHRELFTLLVVLATFLLSLFCVTNGGIYVFTLLDHFAAGTSILFGVLMEVIGVAWFYGVWQFSDDIKQMTGRRPSLYWRLCWKFVSPCFLLFVVVVSIATFRPPHYGAYVFPEWATALGWAIAASSMSVVPIYAAYKLCSLPGSSREKLAYAITPETEHGRVDSGGGAPVHAPPLARGVGRWRKRKSCWVPSRGPGRGGPPTPSPRLAGHTRAFPWTGAPPVPRELTPPSTCRCVPPLVCAHPAVESTGLCSVY</sequence>